<sequence length="276" mass="27510">MESISWNTPSVRDALAAVKRDAPFVYGLTNYVAANLSANVLLAVGAAPAIGAAADWPARFGAGANALWINTAALMSSGADTLLTAARAASKAGTRWVLDPVALGAGAPEYDAIVRDLLALRPTVIRGNASELIALAGGTAAGKGVDTTASPESALAFIGDLARRSGAVVAVSGPTDYVTDGVATLAVAGGDARLTRVTGAGCALGALIAALLAQRGAALAAASAAHAIYATAAERAADARGTASFAVRFVDELSLLDPAESSRDRSAGQIGAKRRE</sequence>
<evidence type="ECO:0000255" key="1">
    <source>
        <dbReference type="HAMAP-Rule" id="MF_00228"/>
    </source>
</evidence>
<evidence type="ECO:0000305" key="2"/>
<proteinExistence type="inferred from homology"/>
<keyword id="KW-0067">ATP-binding</keyword>
<keyword id="KW-0418">Kinase</keyword>
<keyword id="KW-0460">Magnesium</keyword>
<keyword id="KW-0479">Metal-binding</keyword>
<keyword id="KW-0547">Nucleotide-binding</keyword>
<keyword id="KW-0784">Thiamine biosynthesis</keyword>
<keyword id="KW-0808">Transferase</keyword>
<gene>
    <name evidence="1" type="primary">thiM</name>
    <name type="ordered locus">BURPS1106A_A1518</name>
</gene>
<organism>
    <name type="scientific">Burkholderia pseudomallei (strain 1106a)</name>
    <dbReference type="NCBI Taxonomy" id="357348"/>
    <lineage>
        <taxon>Bacteria</taxon>
        <taxon>Pseudomonadati</taxon>
        <taxon>Pseudomonadota</taxon>
        <taxon>Betaproteobacteria</taxon>
        <taxon>Burkholderiales</taxon>
        <taxon>Burkholderiaceae</taxon>
        <taxon>Burkholderia</taxon>
        <taxon>pseudomallei group</taxon>
    </lineage>
</organism>
<name>THIM_BURP0</name>
<reference key="1">
    <citation type="journal article" date="2010" name="Genome Biol. Evol.">
        <title>Continuing evolution of Burkholderia mallei through genome reduction and large-scale rearrangements.</title>
        <authorList>
            <person name="Losada L."/>
            <person name="Ronning C.M."/>
            <person name="DeShazer D."/>
            <person name="Woods D."/>
            <person name="Fedorova N."/>
            <person name="Kim H.S."/>
            <person name="Shabalina S.A."/>
            <person name="Pearson T.R."/>
            <person name="Brinkac L."/>
            <person name="Tan P."/>
            <person name="Nandi T."/>
            <person name="Crabtree J."/>
            <person name="Badger J."/>
            <person name="Beckstrom-Sternberg S."/>
            <person name="Saqib M."/>
            <person name="Schutzer S.E."/>
            <person name="Keim P."/>
            <person name="Nierman W.C."/>
        </authorList>
    </citation>
    <scope>NUCLEOTIDE SEQUENCE [LARGE SCALE GENOMIC DNA]</scope>
    <source>
        <strain>1106a</strain>
    </source>
</reference>
<comment type="function">
    <text evidence="1">Catalyzes the phosphorylation of the hydroxyl group of 4-methyl-5-beta-hydroxyethylthiazole (THZ).</text>
</comment>
<comment type="catalytic activity">
    <reaction evidence="1">
        <text>5-(2-hydroxyethyl)-4-methylthiazole + ATP = 4-methyl-5-(2-phosphooxyethyl)-thiazole + ADP + H(+)</text>
        <dbReference type="Rhea" id="RHEA:24212"/>
        <dbReference type="ChEBI" id="CHEBI:15378"/>
        <dbReference type="ChEBI" id="CHEBI:17957"/>
        <dbReference type="ChEBI" id="CHEBI:30616"/>
        <dbReference type="ChEBI" id="CHEBI:58296"/>
        <dbReference type="ChEBI" id="CHEBI:456216"/>
        <dbReference type="EC" id="2.7.1.50"/>
    </reaction>
</comment>
<comment type="cofactor">
    <cofactor evidence="1">
        <name>Mg(2+)</name>
        <dbReference type="ChEBI" id="CHEBI:18420"/>
    </cofactor>
</comment>
<comment type="pathway">
    <text evidence="1">Cofactor biosynthesis; thiamine diphosphate biosynthesis; 4-methyl-5-(2-phosphoethyl)-thiazole from 5-(2-hydroxyethyl)-4-methylthiazole: step 1/1.</text>
</comment>
<comment type="similarity">
    <text evidence="1">Belongs to the Thz kinase family.</text>
</comment>
<comment type="sequence caution" evidence="2">
    <conflict type="erroneous initiation">
        <sequence resource="EMBL-CDS" id="ABN95350"/>
    </conflict>
</comment>
<protein>
    <recommendedName>
        <fullName evidence="1">Hydroxyethylthiazole kinase</fullName>
        <ecNumber evidence="1">2.7.1.50</ecNumber>
    </recommendedName>
    <alternativeName>
        <fullName evidence="1">4-methyl-5-beta-hydroxyethylthiazole kinase</fullName>
        <shortName evidence="1">TH kinase</shortName>
        <shortName evidence="1">Thz kinase</shortName>
    </alternativeName>
</protein>
<feature type="chain" id="PRO_0000383827" description="Hydroxyethylthiazole kinase">
    <location>
        <begin position="1"/>
        <end position="276"/>
    </location>
</feature>
<feature type="binding site" evidence="1">
    <location>
        <position position="126"/>
    </location>
    <ligand>
        <name>ATP</name>
        <dbReference type="ChEBI" id="CHEBI:30616"/>
    </ligand>
</feature>
<feature type="binding site" evidence="1">
    <location>
        <position position="172"/>
    </location>
    <ligand>
        <name>ATP</name>
        <dbReference type="ChEBI" id="CHEBI:30616"/>
    </ligand>
</feature>
<feature type="binding site" evidence="1">
    <location>
        <position position="199"/>
    </location>
    <ligand>
        <name>substrate</name>
    </ligand>
</feature>
<dbReference type="EC" id="2.7.1.50" evidence="1"/>
<dbReference type="EMBL" id="CP000573">
    <property type="protein sequence ID" value="ABN95350.1"/>
    <property type="status" value="ALT_INIT"/>
    <property type="molecule type" value="Genomic_DNA"/>
</dbReference>
<dbReference type="RefSeq" id="WP_004542754.1">
    <property type="nucleotide sequence ID" value="NC_009078.1"/>
</dbReference>
<dbReference type="SMR" id="A3P5E2"/>
<dbReference type="KEGG" id="bpl:BURPS1106A_A1518"/>
<dbReference type="HOGENOM" id="CLU_019943_0_1_4"/>
<dbReference type="UniPathway" id="UPA00060">
    <property type="reaction ID" value="UER00139"/>
</dbReference>
<dbReference type="Proteomes" id="UP000006738">
    <property type="component" value="Chromosome II"/>
</dbReference>
<dbReference type="GO" id="GO:0005524">
    <property type="term" value="F:ATP binding"/>
    <property type="evidence" value="ECO:0007669"/>
    <property type="project" value="UniProtKB-UniRule"/>
</dbReference>
<dbReference type="GO" id="GO:0004417">
    <property type="term" value="F:hydroxyethylthiazole kinase activity"/>
    <property type="evidence" value="ECO:0007669"/>
    <property type="project" value="UniProtKB-UniRule"/>
</dbReference>
<dbReference type="GO" id="GO:0000287">
    <property type="term" value="F:magnesium ion binding"/>
    <property type="evidence" value="ECO:0007669"/>
    <property type="project" value="UniProtKB-UniRule"/>
</dbReference>
<dbReference type="GO" id="GO:0009228">
    <property type="term" value="P:thiamine biosynthetic process"/>
    <property type="evidence" value="ECO:0007669"/>
    <property type="project" value="UniProtKB-KW"/>
</dbReference>
<dbReference type="GO" id="GO:0009229">
    <property type="term" value="P:thiamine diphosphate biosynthetic process"/>
    <property type="evidence" value="ECO:0007669"/>
    <property type="project" value="UniProtKB-UniRule"/>
</dbReference>
<dbReference type="Gene3D" id="3.40.1190.20">
    <property type="match status" value="1"/>
</dbReference>
<dbReference type="HAMAP" id="MF_00228">
    <property type="entry name" value="Thz_kinase"/>
    <property type="match status" value="1"/>
</dbReference>
<dbReference type="InterPro" id="IPR000417">
    <property type="entry name" value="Hyethyz_kinase"/>
</dbReference>
<dbReference type="InterPro" id="IPR029056">
    <property type="entry name" value="Ribokinase-like"/>
</dbReference>
<dbReference type="Pfam" id="PF02110">
    <property type="entry name" value="HK"/>
    <property type="match status" value="1"/>
</dbReference>
<dbReference type="PIRSF" id="PIRSF000513">
    <property type="entry name" value="Thz_kinase"/>
    <property type="match status" value="1"/>
</dbReference>
<dbReference type="PRINTS" id="PR01099">
    <property type="entry name" value="HYETHTZKNASE"/>
</dbReference>
<dbReference type="SUPFAM" id="SSF53613">
    <property type="entry name" value="Ribokinase-like"/>
    <property type="match status" value="1"/>
</dbReference>
<accession>A3P5E2</accession>